<organism>
    <name type="scientific">Staphylothermus marinus (strain ATCC 43588 / DSM 3639 / JCM 9404 / F1)</name>
    <dbReference type="NCBI Taxonomy" id="399550"/>
    <lineage>
        <taxon>Archaea</taxon>
        <taxon>Thermoproteota</taxon>
        <taxon>Thermoprotei</taxon>
        <taxon>Desulfurococcales</taxon>
        <taxon>Desulfurococcaceae</taxon>
        <taxon>Staphylothermus</taxon>
    </lineage>
</organism>
<keyword id="KW-0963">Cytoplasm</keyword>
<keyword id="KW-0240">DNA-directed RNA polymerase</keyword>
<keyword id="KW-0479">Metal-binding</keyword>
<keyword id="KW-0548">Nucleotidyltransferase</keyword>
<keyword id="KW-1185">Reference proteome</keyword>
<keyword id="KW-0804">Transcription</keyword>
<keyword id="KW-0808">Transferase</keyword>
<keyword id="KW-0862">Zinc</keyword>
<feature type="chain" id="PRO_0000304201" description="DNA-directed RNA polymerase subunit Rpo10">
    <location>
        <begin position="1"/>
        <end position="66"/>
    </location>
</feature>
<feature type="binding site" evidence="1">
    <location>
        <position position="7"/>
    </location>
    <ligand>
        <name>Zn(2+)</name>
        <dbReference type="ChEBI" id="CHEBI:29105"/>
    </ligand>
</feature>
<feature type="binding site" evidence="1">
    <location>
        <position position="10"/>
    </location>
    <ligand>
        <name>Zn(2+)</name>
        <dbReference type="ChEBI" id="CHEBI:29105"/>
    </ligand>
</feature>
<feature type="binding site" evidence="1">
    <location>
        <position position="44"/>
    </location>
    <ligand>
        <name>Zn(2+)</name>
        <dbReference type="ChEBI" id="CHEBI:29105"/>
    </ligand>
</feature>
<feature type="binding site" evidence="1">
    <location>
        <position position="45"/>
    </location>
    <ligand>
        <name>Zn(2+)</name>
        <dbReference type="ChEBI" id="CHEBI:29105"/>
    </ligand>
</feature>
<evidence type="ECO:0000255" key="1">
    <source>
        <dbReference type="HAMAP-Rule" id="MF_00250"/>
    </source>
</evidence>
<dbReference type="EC" id="2.7.7.6" evidence="1"/>
<dbReference type="EMBL" id="CP000575">
    <property type="protein sequence ID" value="ABN69920.1"/>
    <property type="molecule type" value="Genomic_DNA"/>
</dbReference>
<dbReference type="RefSeq" id="WP_011839111.1">
    <property type="nucleotide sequence ID" value="NC_009033.1"/>
</dbReference>
<dbReference type="SMR" id="A3DMR0"/>
<dbReference type="STRING" id="399550.Smar_0819"/>
<dbReference type="GeneID" id="4907565"/>
<dbReference type="KEGG" id="smr:Smar_0819"/>
<dbReference type="eggNOG" id="arCOG04244">
    <property type="taxonomic scope" value="Archaea"/>
</dbReference>
<dbReference type="HOGENOM" id="CLU_143122_1_1_2"/>
<dbReference type="OrthoDB" id="371754at2157"/>
<dbReference type="Proteomes" id="UP000000254">
    <property type="component" value="Chromosome"/>
</dbReference>
<dbReference type="GO" id="GO:0005737">
    <property type="term" value="C:cytoplasm"/>
    <property type="evidence" value="ECO:0007669"/>
    <property type="project" value="UniProtKB-SubCell"/>
</dbReference>
<dbReference type="GO" id="GO:0000428">
    <property type="term" value="C:DNA-directed RNA polymerase complex"/>
    <property type="evidence" value="ECO:0007669"/>
    <property type="project" value="UniProtKB-KW"/>
</dbReference>
<dbReference type="GO" id="GO:0003677">
    <property type="term" value="F:DNA binding"/>
    <property type="evidence" value="ECO:0007669"/>
    <property type="project" value="InterPro"/>
</dbReference>
<dbReference type="GO" id="GO:0003899">
    <property type="term" value="F:DNA-directed RNA polymerase activity"/>
    <property type="evidence" value="ECO:0007669"/>
    <property type="project" value="UniProtKB-UniRule"/>
</dbReference>
<dbReference type="GO" id="GO:0008270">
    <property type="term" value="F:zinc ion binding"/>
    <property type="evidence" value="ECO:0007669"/>
    <property type="project" value="UniProtKB-UniRule"/>
</dbReference>
<dbReference type="GO" id="GO:0006351">
    <property type="term" value="P:DNA-templated transcription"/>
    <property type="evidence" value="ECO:0007669"/>
    <property type="project" value="UniProtKB-UniRule"/>
</dbReference>
<dbReference type="FunFam" id="1.10.10.60:FF:000024">
    <property type="entry name" value="DNA-directed RNA polymerases I, II, and III subunit"/>
    <property type="match status" value="1"/>
</dbReference>
<dbReference type="Gene3D" id="1.10.10.60">
    <property type="entry name" value="Homeodomain-like"/>
    <property type="match status" value="1"/>
</dbReference>
<dbReference type="HAMAP" id="MF_00250">
    <property type="entry name" value="RNApol_arch_Rpo10"/>
    <property type="match status" value="1"/>
</dbReference>
<dbReference type="InterPro" id="IPR023580">
    <property type="entry name" value="RNA_pol_su_RPB10"/>
</dbReference>
<dbReference type="InterPro" id="IPR020789">
    <property type="entry name" value="RNA_pol_suN_Zn-BS"/>
</dbReference>
<dbReference type="InterPro" id="IPR000268">
    <property type="entry name" value="RPABC5/Rpb10"/>
</dbReference>
<dbReference type="NCBIfam" id="NF003089">
    <property type="entry name" value="PRK04016.1"/>
    <property type="match status" value="1"/>
</dbReference>
<dbReference type="PANTHER" id="PTHR23431:SF3">
    <property type="entry name" value="DNA-DIRECTED RNA POLYMERASES I, II, AND III SUBUNIT RPABC5"/>
    <property type="match status" value="1"/>
</dbReference>
<dbReference type="PANTHER" id="PTHR23431">
    <property type="entry name" value="DNA-DIRECTED RNA POLYMERASES I, II, AND III SUBUNIT RPABC5 FAMILY MEMBER"/>
    <property type="match status" value="1"/>
</dbReference>
<dbReference type="Pfam" id="PF01194">
    <property type="entry name" value="RNA_pol_N"/>
    <property type="match status" value="1"/>
</dbReference>
<dbReference type="PIRSF" id="PIRSF005653">
    <property type="entry name" value="RNA_pol_N/8_sub"/>
    <property type="match status" value="1"/>
</dbReference>
<dbReference type="SUPFAM" id="SSF46924">
    <property type="entry name" value="RNA polymerase subunit RPB10"/>
    <property type="match status" value="1"/>
</dbReference>
<dbReference type="PROSITE" id="PS01112">
    <property type="entry name" value="RNA_POL_N_8KD"/>
    <property type="match status" value="1"/>
</dbReference>
<gene>
    <name evidence="1" type="primary">rpo10</name>
    <name evidence="1" type="synonym">rpoN</name>
    <name type="ordered locus">Smar_0819</name>
</gene>
<accession>A3DMR0</accession>
<name>RPO10_STAMF</name>
<protein>
    <recommendedName>
        <fullName evidence="1">DNA-directed RNA polymerase subunit Rpo10</fullName>
        <ecNumber evidence="1">2.7.7.6</ecNumber>
    </recommendedName>
    <alternativeName>
        <fullName evidence="1">DNA-directed RNA polymerase subunit N</fullName>
    </alternativeName>
</protein>
<proteinExistence type="inferred from homology"/>
<sequence length="66" mass="7695">MMFPVRCFTCGAPIGHLWEEFKKRVEAGEDPGKVLDDLGVKRYCCRRMFLSHIEISYEILNFPKVS</sequence>
<comment type="function">
    <text evidence="1">DNA-dependent RNA polymerase (RNAP) catalyzes the transcription of DNA into RNA using the four ribonucleoside triphosphates as substrates.</text>
</comment>
<comment type="catalytic activity">
    <reaction evidence="1">
        <text>RNA(n) + a ribonucleoside 5'-triphosphate = RNA(n+1) + diphosphate</text>
        <dbReference type="Rhea" id="RHEA:21248"/>
        <dbReference type="Rhea" id="RHEA-COMP:14527"/>
        <dbReference type="Rhea" id="RHEA-COMP:17342"/>
        <dbReference type="ChEBI" id="CHEBI:33019"/>
        <dbReference type="ChEBI" id="CHEBI:61557"/>
        <dbReference type="ChEBI" id="CHEBI:140395"/>
        <dbReference type="EC" id="2.7.7.6"/>
    </reaction>
</comment>
<comment type="cofactor">
    <cofactor evidence="1">
        <name>Zn(2+)</name>
        <dbReference type="ChEBI" id="CHEBI:29105"/>
    </cofactor>
    <text evidence="1">Binds 1 zinc ion.</text>
</comment>
<comment type="subunit">
    <text evidence="1">Part of the RNA polymerase complex.</text>
</comment>
<comment type="subcellular location">
    <subcellularLocation>
        <location evidence="1">Cytoplasm</location>
    </subcellularLocation>
</comment>
<comment type="similarity">
    <text evidence="1">Belongs to the archaeal Rpo10/eukaryotic RPB10 RNA polymerase subunit family.</text>
</comment>
<reference key="1">
    <citation type="journal article" date="2009" name="BMC Genomics">
        <title>The complete genome sequence of Staphylothermus marinus reveals differences in sulfur metabolism among heterotrophic Crenarchaeota.</title>
        <authorList>
            <person name="Anderson I.J."/>
            <person name="Dharmarajan L."/>
            <person name="Rodriguez J."/>
            <person name="Hooper S."/>
            <person name="Porat I."/>
            <person name="Ulrich L.E."/>
            <person name="Elkins J.G."/>
            <person name="Mavromatis K."/>
            <person name="Sun H."/>
            <person name="Land M."/>
            <person name="Lapidus A."/>
            <person name="Lucas S."/>
            <person name="Barry K."/>
            <person name="Huber H."/>
            <person name="Zhulin I.B."/>
            <person name="Whitman W.B."/>
            <person name="Mukhopadhyay B."/>
            <person name="Woese C."/>
            <person name="Bristow J."/>
            <person name="Kyrpides N."/>
        </authorList>
    </citation>
    <scope>NUCLEOTIDE SEQUENCE [LARGE SCALE GENOMIC DNA]</scope>
    <source>
        <strain>ATCC 43588 / DSM 3639 / JCM 9404 / F1</strain>
    </source>
</reference>
<reference key="2">
    <citation type="journal article" date="2009" name="Stand. Genomic Sci.">
        <title>Complete genome sequence of Staphylothermus marinus Stetter and Fiala 1986 type strain F1.</title>
        <authorList>
            <person name="Anderson I.J."/>
            <person name="Sun H."/>
            <person name="Lapidus A."/>
            <person name="Copeland A."/>
            <person name="Glavina Del Rio T."/>
            <person name="Tice H."/>
            <person name="Dalin E."/>
            <person name="Lucas S."/>
            <person name="Barry K."/>
            <person name="Land M."/>
            <person name="Richardson P."/>
            <person name="Huber H."/>
            <person name="Kyrpides N.C."/>
        </authorList>
    </citation>
    <scope>NUCLEOTIDE SEQUENCE [LARGE SCALE GENOMIC DNA]</scope>
    <source>
        <strain>ATCC 43588 / DSM 3639 / JCM 9404 / F1</strain>
    </source>
</reference>